<protein>
    <recommendedName>
        <fullName evidence="1">Gamma-glutamyl phosphate reductase</fullName>
        <shortName evidence="1">GPR</shortName>
        <ecNumber evidence="1">1.2.1.41</ecNumber>
    </recommendedName>
    <alternativeName>
        <fullName evidence="1">Glutamate-5-semialdehyde dehydrogenase</fullName>
    </alternativeName>
    <alternativeName>
        <fullName evidence="1">Glutamyl-gamma-semialdehyde dehydrogenase</fullName>
        <shortName evidence="1">GSA dehydrogenase</shortName>
    </alternativeName>
</protein>
<proteinExistence type="inferred from homology"/>
<evidence type="ECO:0000255" key="1">
    <source>
        <dbReference type="HAMAP-Rule" id="MF_00412"/>
    </source>
</evidence>
<accession>Q890J4</accession>
<accession>F9US47</accession>
<name>PROA_LACPL</name>
<keyword id="KW-0028">Amino-acid biosynthesis</keyword>
<keyword id="KW-0963">Cytoplasm</keyword>
<keyword id="KW-0521">NADP</keyword>
<keyword id="KW-0560">Oxidoreductase</keyword>
<keyword id="KW-0641">Proline biosynthesis</keyword>
<keyword id="KW-1185">Reference proteome</keyword>
<reference key="1">
    <citation type="journal article" date="2003" name="Proc. Natl. Acad. Sci. U.S.A.">
        <title>Complete genome sequence of Lactobacillus plantarum WCFS1.</title>
        <authorList>
            <person name="Kleerebezem M."/>
            <person name="Boekhorst J."/>
            <person name="van Kranenburg R."/>
            <person name="Molenaar D."/>
            <person name="Kuipers O.P."/>
            <person name="Leer R."/>
            <person name="Tarchini R."/>
            <person name="Peters S.A."/>
            <person name="Sandbrink H.M."/>
            <person name="Fiers M.W.E.J."/>
            <person name="Stiekema W."/>
            <person name="Klein Lankhorst R.M."/>
            <person name="Bron P.A."/>
            <person name="Hoffer S.M."/>
            <person name="Nierop Groot M.N."/>
            <person name="Kerkhoven R."/>
            <person name="De Vries M."/>
            <person name="Ursing B."/>
            <person name="De Vos W.M."/>
            <person name="Siezen R.J."/>
        </authorList>
    </citation>
    <scope>NUCLEOTIDE SEQUENCE [LARGE SCALE GENOMIC DNA]</scope>
    <source>
        <strain>ATCC BAA-793 / NCIMB 8826 / WCFS1</strain>
    </source>
</reference>
<reference key="2">
    <citation type="journal article" date="2012" name="J. Bacteriol.">
        <title>Complete resequencing and reannotation of the Lactobacillus plantarum WCFS1 genome.</title>
        <authorList>
            <person name="Siezen R.J."/>
            <person name="Francke C."/>
            <person name="Renckens B."/>
            <person name="Boekhorst J."/>
            <person name="Wels M."/>
            <person name="Kleerebezem M."/>
            <person name="van Hijum S.A."/>
        </authorList>
    </citation>
    <scope>NUCLEOTIDE SEQUENCE [LARGE SCALE GENOMIC DNA]</scope>
    <scope>GENOME REANNOTATION</scope>
    <source>
        <strain>ATCC BAA-793 / NCIMB 8826 / WCFS1</strain>
    </source>
</reference>
<dbReference type="EC" id="1.2.1.41" evidence="1"/>
<dbReference type="EMBL" id="AL935263">
    <property type="protein sequence ID" value="CCC77594.1"/>
    <property type="molecule type" value="Genomic_DNA"/>
</dbReference>
<dbReference type="RefSeq" id="WP_003641641.1">
    <property type="nucleotide sequence ID" value="NC_004567.2"/>
</dbReference>
<dbReference type="RefSeq" id="YP_004888108.1">
    <property type="nucleotide sequence ID" value="NC_004567.2"/>
</dbReference>
<dbReference type="SMR" id="Q890J4"/>
<dbReference type="STRING" id="220668.lp_0017"/>
<dbReference type="EnsemblBacteria" id="CCC77594">
    <property type="protein sequence ID" value="CCC77594"/>
    <property type="gene ID" value="lp_0017"/>
</dbReference>
<dbReference type="KEGG" id="lpl:lp_0017"/>
<dbReference type="PATRIC" id="fig|220668.9.peg.15"/>
<dbReference type="eggNOG" id="COG0014">
    <property type="taxonomic scope" value="Bacteria"/>
</dbReference>
<dbReference type="HOGENOM" id="CLU_030231_0_0_9"/>
<dbReference type="OrthoDB" id="9809970at2"/>
<dbReference type="PhylomeDB" id="Q890J4"/>
<dbReference type="UniPathway" id="UPA00098">
    <property type="reaction ID" value="UER00360"/>
</dbReference>
<dbReference type="Proteomes" id="UP000000432">
    <property type="component" value="Chromosome"/>
</dbReference>
<dbReference type="GO" id="GO:0005737">
    <property type="term" value="C:cytoplasm"/>
    <property type="evidence" value="ECO:0007669"/>
    <property type="project" value="UniProtKB-SubCell"/>
</dbReference>
<dbReference type="GO" id="GO:0004350">
    <property type="term" value="F:glutamate-5-semialdehyde dehydrogenase activity"/>
    <property type="evidence" value="ECO:0007669"/>
    <property type="project" value="UniProtKB-UniRule"/>
</dbReference>
<dbReference type="GO" id="GO:0050661">
    <property type="term" value="F:NADP binding"/>
    <property type="evidence" value="ECO:0007669"/>
    <property type="project" value="InterPro"/>
</dbReference>
<dbReference type="GO" id="GO:0055129">
    <property type="term" value="P:L-proline biosynthetic process"/>
    <property type="evidence" value="ECO:0007669"/>
    <property type="project" value="UniProtKB-UniRule"/>
</dbReference>
<dbReference type="CDD" id="cd07079">
    <property type="entry name" value="ALDH_F18-19_ProA-GPR"/>
    <property type="match status" value="1"/>
</dbReference>
<dbReference type="FunFam" id="3.40.309.10:FF:000006">
    <property type="entry name" value="Gamma-glutamyl phosphate reductase"/>
    <property type="match status" value="1"/>
</dbReference>
<dbReference type="Gene3D" id="3.40.605.10">
    <property type="entry name" value="Aldehyde Dehydrogenase, Chain A, domain 1"/>
    <property type="match status" value="1"/>
</dbReference>
<dbReference type="Gene3D" id="3.40.309.10">
    <property type="entry name" value="Aldehyde Dehydrogenase, Chain A, domain 2"/>
    <property type="match status" value="1"/>
</dbReference>
<dbReference type="HAMAP" id="MF_00412">
    <property type="entry name" value="ProA"/>
    <property type="match status" value="1"/>
</dbReference>
<dbReference type="InterPro" id="IPR016161">
    <property type="entry name" value="Ald_DH/histidinol_DH"/>
</dbReference>
<dbReference type="InterPro" id="IPR016163">
    <property type="entry name" value="Ald_DH_C"/>
</dbReference>
<dbReference type="InterPro" id="IPR016162">
    <property type="entry name" value="Ald_DH_N"/>
</dbReference>
<dbReference type="InterPro" id="IPR015590">
    <property type="entry name" value="Aldehyde_DH_dom"/>
</dbReference>
<dbReference type="InterPro" id="IPR020593">
    <property type="entry name" value="G-glutamylP_reductase_CS"/>
</dbReference>
<dbReference type="InterPro" id="IPR012134">
    <property type="entry name" value="Glu-5-SA_DH"/>
</dbReference>
<dbReference type="InterPro" id="IPR000965">
    <property type="entry name" value="GPR_dom"/>
</dbReference>
<dbReference type="NCBIfam" id="NF001221">
    <property type="entry name" value="PRK00197.1"/>
    <property type="match status" value="1"/>
</dbReference>
<dbReference type="NCBIfam" id="TIGR00407">
    <property type="entry name" value="proA"/>
    <property type="match status" value="1"/>
</dbReference>
<dbReference type="PANTHER" id="PTHR11063:SF8">
    <property type="entry name" value="DELTA-1-PYRROLINE-5-CARBOXYLATE SYNTHASE"/>
    <property type="match status" value="1"/>
</dbReference>
<dbReference type="PANTHER" id="PTHR11063">
    <property type="entry name" value="GLUTAMATE SEMIALDEHYDE DEHYDROGENASE"/>
    <property type="match status" value="1"/>
</dbReference>
<dbReference type="Pfam" id="PF00171">
    <property type="entry name" value="Aldedh"/>
    <property type="match status" value="1"/>
</dbReference>
<dbReference type="PIRSF" id="PIRSF000151">
    <property type="entry name" value="GPR"/>
    <property type="match status" value="1"/>
</dbReference>
<dbReference type="SUPFAM" id="SSF53720">
    <property type="entry name" value="ALDH-like"/>
    <property type="match status" value="1"/>
</dbReference>
<dbReference type="PROSITE" id="PS01223">
    <property type="entry name" value="PROA"/>
    <property type="match status" value="1"/>
</dbReference>
<feature type="chain" id="PRO_0000189737" description="Gamma-glutamyl phosphate reductase">
    <location>
        <begin position="1"/>
        <end position="412"/>
    </location>
</feature>
<sequence>MVDLEQLGQQAQQASYTLGLLSTAQKNQVLTAMATALTSHQDEILAANAQDLENPQVPVKFVDRLRLTADRIQDMAIGLKQVVSLPDPIGNVDRAWRNEAGLMIAKERVPLGVIGMIFEARPNVTVDASALCFKTGNAVILRGGKEALHSNQALVQVLRGALRAEAVDENAIQLITDTSHATAAKFMQLTDYVDVLIPRGSARLIQTVLAKATVPVIETGAGNCHVYVDKDAQLQMATDIVINGKVQRPSVCNATEKLLIHREVAADYLPSMIQALREQGVEVRGDAATQAIVPDVVPATDADWGTEYNDLIIAVKVVDSEAAAITHINRYNTQHSEAIVTDNYQAGKLFQQRVNAACVYINASTRFTDGFEFGFGAEIGISTQKLHARGPMGLAELTSYKYVIDGNGQIRH</sequence>
<organism>
    <name type="scientific">Lactiplantibacillus plantarum (strain ATCC BAA-793 / NCIMB 8826 / WCFS1)</name>
    <name type="common">Lactobacillus plantarum</name>
    <dbReference type="NCBI Taxonomy" id="220668"/>
    <lineage>
        <taxon>Bacteria</taxon>
        <taxon>Bacillati</taxon>
        <taxon>Bacillota</taxon>
        <taxon>Bacilli</taxon>
        <taxon>Lactobacillales</taxon>
        <taxon>Lactobacillaceae</taxon>
        <taxon>Lactiplantibacillus</taxon>
    </lineage>
</organism>
<comment type="function">
    <text evidence="1">Catalyzes the NADPH-dependent reduction of L-glutamate 5-phosphate into L-glutamate 5-semialdehyde and phosphate. The product spontaneously undergoes cyclization to form 1-pyrroline-5-carboxylate.</text>
</comment>
<comment type="catalytic activity">
    <reaction evidence="1">
        <text>L-glutamate 5-semialdehyde + phosphate + NADP(+) = L-glutamyl 5-phosphate + NADPH + H(+)</text>
        <dbReference type="Rhea" id="RHEA:19541"/>
        <dbReference type="ChEBI" id="CHEBI:15378"/>
        <dbReference type="ChEBI" id="CHEBI:43474"/>
        <dbReference type="ChEBI" id="CHEBI:57783"/>
        <dbReference type="ChEBI" id="CHEBI:58066"/>
        <dbReference type="ChEBI" id="CHEBI:58274"/>
        <dbReference type="ChEBI" id="CHEBI:58349"/>
        <dbReference type="EC" id="1.2.1.41"/>
    </reaction>
</comment>
<comment type="pathway">
    <text evidence="1">Amino-acid biosynthesis; L-proline biosynthesis; L-glutamate 5-semialdehyde from L-glutamate: step 2/2.</text>
</comment>
<comment type="subcellular location">
    <subcellularLocation>
        <location evidence="1">Cytoplasm</location>
    </subcellularLocation>
</comment>
<comment type="similarity">
    <text evidence="1">Belongs to the gamma-glutamyl phosphate reductase family.</text>
</comment>
<gene>
    <name evidence="1" type="primary">proA</name>
    <name type="ordered locus">lp_0017</name>
</gene>